<gene>
    <name evidence="1" type="primary">rpl19</name>
</gene>
<reference key="1">
    <citation type="journal article" date="2000" name="Nature">
        <title>Ancestral chloroplast genome in Mesostigma viride reveals an early branch of green plant evolution.</title>
        <authorList>
            <person name="Lemieux C."/>
            <person name="Otis C."/>
            <person name="Turmel M."/>
        </authorList>
    </citation>
    <scope>NUCLEOTIDE SEQUENCE [LARGE SCALE GENOMIC DNA]</scope>
    <source>
        <strain>NIES-296 / KY-14 / CCMP 2046</strain>
    </source>
</reference>
<organism>
    <name type="scientific">Mesostigma viride</name>
    <name type="common">Green alga</name>
    <dbReference type="NCBI Taxonomy" id="41882"/>
    <lineage>
        <taxon>Eukaryota</taxon>
        <taxon>Viridiplantae</taxon>
        <taxon>Streptophyta</taxon>
        <taxon>Mesostigmatophyceae</taxon>
        <taxon>Mesostigmatales</taxon>
        <taxon>Mesostigmataceae</taxon>
        <taxon>Mesostigma</taxon>
    </lineage>
</organism>
<geneLocation type="chloroplast"/>
<comment type="subcellular location">
    <subcellularLocation>
        <location>Plastid</location>
        <location>Chloroplast</location>
    </subcellularLocation>
</comment>
<comment type="similarity">
    <text evidence="1">Belongs to the bacterial ribosomal protein bL19 family.</text>
</comment>
<protein>
    <recommendedName>
        <fullName evidence="1">Large ribosomal subunit protein bL19c</fullName>
    </recommendedName>
    <alternativeName>
        <fullName evidence="2">50S ribosomal protein L19, chloroplastic</fullName>
    </alternativeName>
</protein>
<keyword id="KW-0150">Chloroplast</keyword>
<keyword id="KW-0934">Plastid</keyword>
<keyword id="KW-0687">Ribonucleoprotein</keyword>
<keyword id="KW-0689">Ribosomal protein</keyword>
<evidence type="ECO:0000255" key="1">
    <source>
        <dbReference type="HAMAP-Rule" id="MF_00402"/>
    </source>
</evidence>
<evidence type="ECO:0000305" key="2"/>
<sequence>MNRNQILQNIEANQIKANLPNIYVGDYVKVGLLIQEGNKERVQPYEGVVIAKHNSASNSTITVRKMFQGIGVERIFLIHSPRITSIEVISNSKVRRAKLYYLRERIGKATRLKQKFSKV</sequence>
<dbReference type="EMBL" id="AF166114">
    <property type="protein sequence ID" value="AAF43861.1"/>
    <property type="molecule type" value="Genomic_DNA"/>
</dbReference>
<dbReference type="RefSeq" id="NP_038421.1">
    <property type="nucleotide sequence ID" value="NC_002186.1"/>
</dbReference>
<dbReference type="SMR" id="Q9MUN9"/>
<dbReference type="GeneID" id="800889"/>
<dbReference type="GO" id="GO:0009507">
    <property type="term" value="C:chloroplast"/>
    <property type="evidence" value="ECO:0007669"/>
    <property type="project" value="UniProtKB-SubCell"/>
</dbReference>
<dbReference type="GO" id="GO:1990904">
    <property type="term" value="C:ribonucleoprotein complex"/>
    <property type="evidence" value="ECO:0007669"/>
    <property type="project" value="UniProtKB-KW"/>
</dbReference>
<dbReference type="GO" id="GO:0005840">
    <property type="term" value="C:ribosome"/>
    <property type="evidence" value="ECO:0007669"/>
    <property type="project" value="UniProtKB-KW"/>
</dbReference>
<dbReference type="GO" id="GO:0003735">
    <property type="term" value="F:structural constituent of ribosome"/>
    <property type="evidence" value="ECO:0007669"/>
    <property type="project" value="InterPro"/>
</dbReference>
<dbReference type="GO" id="GO:0006412">
    <property type="term" value="P:translation"/>
    <property type="evidence" value="ECO:0007669"/>
    <property type="project" value="UniProtKB-UniRule"/>
</dbReference>
<dbReference type="FunFam" id="2.30.30.790:FF:000004">
    <property type="entry name" value="50S ribosomal protein L19, chloroplastic"/>
    <property type="match status" value="1"/>
</dbReference>
<dbReference type="Gene3D" id="2.30.30.790">
    <property type="match status" value="1"/>
</dbReference>
<dbReference type="HAMAP" id="MF_00402">
    <property type="entry name" value="Ribosomal_bL19"/>
    <property type="match status" value="1"/>
</dbReference>
<dbReference type="InterPro" id="IPR001857">
    <property type="entry name" value="Ribosomal_bL19"/>
</dbReference>
<dbReference type="InterPro" id="IPR018257">
    <property type="entry name" value="Ribosomal_bL19_CS"/>
</dbReference>
<dbReference type="InterPro" id="IPR038657">
    <property type="entry name" value="Ribosomal_bL19_sf"/>
</dbReference>
<dbReference type="InterPro" id="IPR008991">
    <property type="entry name" value="Translation_prot_SH3-like_sf"/>
</dbReference>
<dbReference type="NCBIfam" id="TIGR01024">
    <property type="entry name" value="rplS_bact"/>
    <property type="match status" value="1"/>
</dbReference>
<dbReference type="PANTHER" id="PTHR15680:SF9">
    <property type="entry name" value="LARGE RIBOSOMAL SUBUNIT PROTEIN BL19M"/>
    <property type="match status" value="1"/>
</dbReference>
<dbReference type="PANTHER" id="PTHR15680">
    <property type="entry name" value="RIBOSOMAL PROTEIN L19"/>
    <property type="match status" value="1"/>
</dbReference>
<dbReference type="Pfam" id="PF01245">
    <property type="entry name" value="Ribosomal_L19"/>
    <property type="match status" value="1"/>
</dbReference>
<dbReference type="PIRSF" id="PIRSF002191">
    <property type="entry name" value="Ribosomal_L19"/>
    <property type="match status" value="1"/>
</dbReference>
<dbReference type="PRINTS" id="PR00061">
    <property type="entry name" value="RIBOSOMALL19"/>
</dbReference>
<dbReference type="SUPFAM" id="SSF50104">
    <property type="entry name" value="Translation proteins SH3-like domain"/>
    <property type="match status" value="1"/>
</dbReference>
<dbReference type="PROSITE" id="PS01015">
    <property type="entry name" value="RIBOSOMAL_L19"/>
    <property type="match status" value="1"/>
</dbReference>
<name>RK19_MESVI</name>
<feature type="chain" id="PRO_0000163584" description="Large ribosomal subunit protein bL19c">
    <location>
        <begin position="1"/>
        <end position="119"/>
    </location>
</feature>
<proteinExistence type="inferred from homology"/>
<accession>Q9MUN9</accession>